<dbReference type="EC" id="2.7.7.56" evidence="1"/>
<dbReference type="EMBL" id="BX294142">
    <property type="protein sequence ID" value="CAD74398.1"/>
    <property type="molecule type" value="Genomic_DNA"/>
</dbReference>
<dbReference type="RefSeq" id="NP_866857.1">
    <property type="nucleotide sequence ID" value="NC_005027.1"/>
</dbReference>
<dbReference type="RefSeq" id="WP_007330546.1">
    <property type="nucleotide sequence ID" value="NC_005027.1"/>
</dbReference>
<dbReference type="SMR" id="Q7URE2"/>
<dbReference type="FunCoup" id="Q7URE2">
    <property type="interactions" value="438"/>
</dbReference>
<dbReference type="STRING" id="243090.RB5725"/>
<dbReference type="EnsemblBacteria" id="CAD74398">
    <property type="protein sequence ID" value="CAD74398"/>
    <property type="gene ID" value="RB5725"/>
</dbReference>
<dbReference type="KEGG" id="rba:RB5725"/>
<dbReference type="PATRIC" id="fig|243090.15.peg.2752"/>
<dbReference type="eggNOG" id="COG0689">
    <property type="taxonomic scope" value="Bacteria"/>
</dbReference>
<dbReference type="HOGENOM" id="CLU_050858_0_0_0"/>
<dbReference type="InParanoid" id="Q7URE2"/>
<dbReference type="OrthoDB" id="9807456at2"/>
<dbReference type="Proteomes" id="UP000001025">
    <property type="component" value="Chromosome"/>
</dbReference>
<dbReference type="GO" id="GO:0000175">
    <property type="term" value="F:3'-5'-RNA exonuclease activity"/>
    <property type="evidence" value="ECO:0007669"/>
    <property type="project" value="UniProtKB-UniRule"/>
</dbReference>
<dbReference type="GO" id="GO:0003723">
    <property type="term" value="F:RNA binding"/>
    <property type="evidence" value="ECO:0000318"/>
    <property type="project" value="GO_Central"/>
</dbReference>
<dbReference type="GO" id="GO:0000049">
    <property type="term" value="F:tRNA binding"/>
    <property type="evidence" value="ECO:0007669"/>
    <property type="project" value="UniProtKB-UniRule"/>
</dbReference>
<dbReference type="GO" id="GO:0009022">
    <property type="term" value="F:tRNA nucleotidyltransferase activity"/>
    <property type="evidence" value="ECO:0007669"/>
    <property type="project" value="UniProtKB-UniRule"/>
</dbReference>
<dbReference type="GO" id="GO:0016075">
    <property type="term" value="P:rRNA catabolic process"/>
    <property type="evidence" value="ECO:0000318"/>
    <property type="project" value="GO_Central"/>
</dbReference>
<dbReference type="GO" id="GO:0006364">
    <property type="term" value="P:rRNA processing"/>
    <property type="evidence" value="ECO:0007669"/>
    <property type="project" value="UniProtKB-KW"/>
</dbReference>
<dbReference type="GO" id="GO:0008033">
    <property type="term" value="P:tRNA processing"/>
    <property type="evidence" value="ECO:0007669"/>
    <property type="project" value="UniProtKB-UniRule"/>
</dbReference>
<dbReference type="CDD" id="cd11362">
    <property type="entry name" value="RNase_PH_bact"/>
    <property type="match status" value="1"/>
</dbReference>
<dbReference type="FunFam" id="3.30.230.70:FF:000003">
    <property type="entry name" value="Ribonuclease PH"/>
    <property type="match status" value="1"/>
</dbReference>
<dbReference type="Gene3D" id="3.30.230.70">
    <property type="entry name" value="GHMP Kinase, N-terminal domain"/>
    <property type="match status" value="1"/>
</dbReference>
<dbReference type="HAMAP" id="MF_00564">
    <property type="entry name" value="RNase_PH"/>
    <property type="match status" value="1"/>
</dbReference>
<dbReference type="InterPro" id="IPR001247">
    <property type="entry name" value="ExoRNase_PH_dom1"/>
</dbReference>
<dbReference type="InterPro" id="IPR015847">
    <property type="entry name" value="ExoRNase_PH_dom2"/>
</dbReference>
<dbReference type="InterPro" id="IPR036345">
    <property type="entry name" value="ExoRNase_PH_dom2_sf"/>
</dbReference>
<dbReference type="InterPro" id="IPR027408">
    <property type="entry name" value="PNPase/RNase_PH_dom_sf"/>
</dbReference>
<dbReference type="InterPro" id="IPR020568">
    <property type="entry name" value="Ribosomal_Su5_D2-typ_SF"/>
</dbReference>
<dbReference type="InterPro" id="IPR050080">
    <property type="entry name" value="RNase_PH"/>
</dbReference>
<dbReference type="InterPro" id="IPR002381">
    <property type="entry name" value="RNase_PH_bac-type"/>
</dbReference>
<dbReference type="InterPro" id="IPR018336">
    <property type="entry name" value="RNase_PH_CS"/>
</dbReference>
<dbReference type="NCBIfam" id="TIGR01966">
    <property type="entry name" value="RNasePH"/>
    <property type="match status" value="1"/>
</dbReference>
<dbReference type="PANTHER" id="PTHR11953">
    <property type="entry name" value="EXOSOME COMPLEX COMPONENT"/>
    <property type="match status" value="1"/>
</dbReference>
<dbReference type="PANTHER" id="PTHR11953:SF0">
    <property type="entry name" value="EXOSOME COMPLEX COMPONENT RRP41"/>
    <property type="match status" value="1"/>
</dbReference>
<dbReference type="Pfam" id="PF01138">
    <property type="entry name" value="RNase_PH"/>
    <property type="match status" value="1"/>
</dbReference>
<dbReference type="Pfam" id="PF03725">
    <property type="entry name" value="RNase_PH_C"/>
    <property type="match status" value="1"/>
</dbReference>
<dbReference type="SUPFAM" id="SSF55666">
    <property type="entry name" value="Ribonuclease PH domain 2-like"/>
    <property type="match status" value="1"/>
</dbReference>
<dbReference type="SUPFAM" id="SSF54211">
    <property type="entry name" value="Ribosomal protein S5 domain 2-like"/>
    <property type="match status" value="1"/>
</dbReference>
<dbReference type="PROSITE" id="PS01277">
    <property type="entry name" value="RIBONUCLEASE_PH"/>
    <property type="match status" value="1"/>
</dbReference>
<evidence type="ECO:0000255" key="1">
    <source>
        <dbReference type="HAMAP-Rule" id="MF_00564"/>
    </source>
</evidence>
<evidence type="ECO:0000256" key="2">
    <source>
        <dbReference type="SAM" id="MobiDB-lite"/>
    </source>
</evidence>
<gene>
    <name evidence="1" type="primary">rph</name>
    <name type="ordered locus">RB5725</name>
</gene>
<keyword id="KW-0548">Nucleotidyltransferase</keyword>
<keyword id="KW-1185">Reference proteome</keyword>
<keyword id="KW-0694">RNA-binding</keyword>
<keyword id="KW-0698">rRNA processing</keyword>
<keyword id="KW-0808">Transferase</keyword>
<keyword id="KW-0819">tRNA processing</keyword>
<keyword id="KW-0820">tRNA-binding</keyword>
<organism>
    <name type="scientific">Rhodopirellula baltica (strain DSM 10527 / NCIMB 13988 / SH1)</name>
    <dbReference type="NCBI Taxonomy" id="243090"/>
    <lineage>
        <taxon>Bacteria</taxon>
        <taxon>Pseudomonadati</taxon>
        <taxon>Planctomycetota</taxon>
        <taxon>Planctomycetia</taxon>
        <taxon>Pirellulales</taxon>
        <taxon>Pirellulaceae</taxon>
        <taxon>Rhodopirellula</taxon>
    </lineage>
</organism>
<protein>
    <recommendedName>
        <fullName evidence="1">Ribonuclease PH</fullName>
        <shortName evidence="1">RNase PH</shortName>
        <ecNumber evidence="1">2.7.7.56</ecNumber>
    </recommendedName>
    <alternativeName>
        <fullName evidence="1">tRNA nucleotidyltransferase</fullName>
    </alternativeName>
</protein>
<reference key="1">
    <citation type="journal article" date="2003" name="Proc. Natl. Acad. Sci. U.S.A.">
        <title>Complete genome sequence of the marine planctomycete Pirellula sp. strain 1.</title>
        <authorList>
            <person name="Gloeckner F.O."/>
            <person name="Kube M."/>
            <person name="Bauer M."/>
            <person name="Teeling H."/>
            <person name="Lombardot T."/>
            <person name="Ludwig W."/>
            <person name="Gade D."/>
            <person name="Beck A."/>
            <person name="Borzym K."/>
            <person name="Heitmann K."/>
            <person name="Rabus R."/>
            <person name="Schlesner H."/>
            <person name="Amann R."/>
            <person name="Reinhardt R."/>
        </authorList>
    </citation>
    <scope>NUCLEOTIDE SEQUENCE [LARGE SCALE GENOMIC DNA]</scope>
    <source>
        <strain>DSM 10527 / NCIMB 13988 / SH1</strain>
    </source>
</reference>
<comment type="function">
    <text evidence="1">Phosphorolytic 3'-5' exoribonuclease that plays an important role in tRNA 3'-end maturation. Removes nucleotide residues following the 3'-CCA terminus of tRNAs; can also add nucleotides to the ends of RNA molecules by using nucleoside diphosphates as substrates, but this may not be physiologically important. Probably plays a role in initiation of 16S rRNA degradation (leading to ribosome degradation) during starvation.</text>
</comment>
<comment type="catalytic activity">
    <reaction evidence="1">
        <text>tRNA(n+1) + phosphate = tRNA(n) + a ribonucleoside 5'-diphosphate</text>
        <dbReference type="Rhea" id="RHEA:10628"/>
        <dbReference type="Rhea" id="RHEA-COMP:17343"/>
        <dbReference type="Rhea" id="RHEA-COMP:17344"/>
        <dbReference type="ChEBI" id="CHEBI:43474"/>
        <dbReference type="ChEBI" id="CHEBI:57930"/>
        <dbReference type="ChEBI" id="CHEBI:173114"/>
        <dbReference type="EC" id="2.7.7.56"/>
    </reaction>
</comment>
<comment type="subunit">
    <text evidence="1">Homohexameric ring arranged as a trimer of dimers.</text>
</comment>
<comment type="similarity">
    <text evidence="1">Belongs to the RNase PH family.</text>
</comment>
<name>RNPH_RHOBA</name>
<feature type="chain" id="PRO_0000139930" description="Ribonuclease PH">
    <location>
        <begin position="1"/>
        <end position="246"/>
    </location>
</feature>
<feature type="region of interest" description="Disordered" evidence="2">
    <location>
        <begin position="67"/>
        <end position="87"/>
    </location>
</feature>
<feature type="binding site" evidence="1">
    <location>
        <position position="88"/>
    </location>
    <ligand>
        <name>phosphate</name>
        <dbReference type="ChEBI" id="CHEBI:43474"/>
        <note>substrate</note>
    </ligand>
</feature>
<feature type="binding site" evidence="1">
    <location>
        <begin position="126"/>
        <end position="128"/>
    </location>
    <ligand>
        <name>phosphate</name>
        <dbReference type="ChEBI" id="CHEBI:43474"/>
        <note>substrate</note>
    </ligand>
</feature>
<accession>Q7URE2</accession>
<sequence length="246" mass="26334">MNSATDSARPHDQIRPVEIECGYLESNPASVLYKSGKTIVLCTASVETNVPPWMEGRGKGWVTAEYNMLPGSTSPRKRRDRSGKVDGRTTEIQRLIGRSLRAIVDLHALGERSITVDCDVLQADGGTRTASITGGYIALSLAVSQLAAIPELDPPVDPTAVLRDSVAAISVGVIGEDVVLDLDYRLDSAADVDMNVIMTGSGRFIELQGTGEEATFDDVQLAELLRLGKIGIAELTKLQKAQLVTV</sequence>
<proteinExistence type="inferred from homology"/>